<sequence>MAPPTRQLLNAVLVLLLLLATNHQGTGVVVASELRCQCLTTLPRVDFKNIQSLTVTPPGPHCAQTEVIATLKDGHEVCLNPEAPLVQRIVQKILNKGKAN</sequence>
<feature type="signal peptide" evidence="2 3 4">
    <location>
        <begin position="1"/>
        <end position="31"/>
    </location>
</feature>
<feature type="chain" id="PRO_0000005062" description="C-X-C motif chemokine 2">
    <location>
        <begin position="32"/>
        <end position="100"/>
    </location>
</feature>
<feature type="disulfide bond" evidence="1">
    <location>
        <begin position="36"/>
        <end position="62"/>
    </location>
</feature>
<feature type="disulfide bond" evidence="1">
    <location>
        <begin position="38"/>
        <end position="78"/>
    </location>
</feature>
<protein>
    <recommendedName>
        <fullName>C-X-C motif chemokine 2</fullName>
    </recommendedName>
    <alternativeName>
        <fullName>Cytokine-induced neutrophil chemoattractant 3</fullName>
        <shortName>CINC-3</shortName>
    </alternativeName>
    <alternativeName>
        <fullName>Macrophage inflammatory protein 2</fullName>
        <shortName>MIP2</shortName>
    </alternativeName>
</protein>
<dbReference type="EMBL" id="X65647">
    <property type="protein sequence ID" value="CAA46599.1"/>
    <property type="molecule type" value="mRNA"/>
</dbReference>
<dbReference type="EMBL" id="S77604">
    <property type="protein sequence ID" value="AAB33749.1"/>
    <property type="molecule type" value="mRNA"/>
</dbReference>
<dbReference type="EMBL" id="U45965">
    <property type="protein sequence ID" value="AAA92438.1"/>
    <property type="molecule type" value="mRNA"/>
</dbReference>
<dbReference type="EMBL" id="AB060092">
    <property type="protein sequence ID" value="BAB41105.1"/>
    <property type="molecule type" value="mRNA"/>
</dbReference>
<dbReference type="EMBL" id="S45855">
    <property type="status" value="NOT_ANNOTATED_CDS"/>
    <property type="molecule type" value="mRNA"/>
</dbReference>
<dbReference type="PIR" id="S21467">
    <property type="entry name" value="S21467"/>
</dbReference>
<dbReference type="RefSeq" id="NP_446099.1">
    <property type="nucleotide sequence ID" value="NM_053647.2"/>
</dbReference>
<dbReference type="SMR" id="P30348"/>
<dbReference type="BioGRID" id="250284">
    <property type="interactions" value="1"/>
</dbReference>
<dbReference type="FunCoup" id="P30348">
    <property type="interactions" value="579"/>
</dbReference>
<dbReference type="STRING" id="10116.ENSRNOP00000003745"/>
<dbReference type="PaxDb" id="10116-ENSRNOP00000003745"/>
<dbReference type="Ensembl" id="ENSRNOT00000003745.7">
    <property type="protein sequence ID" value="ENSRNOP00000003745.3"/>
    <property type="gene ID" value="ENSRNOG00000002792.7"/>
</dbReference>
<dbReference type="GeneID" id="114105"/>
<dbReference type="KEGG" id="rno:114105"/>
<dbReference type="UCSC" id="RGD:70069">
    <property type="organism name" value="rat"/>
</dbReference>
<dbReference type="AGR" id="RGD:70069"/>
<dbReference type="CTD" id="2920"/>
<dbReference type="RGD" id="70069">
    <property type="gene designation" value="Cxcl2"/>
</dbReference>
<dbReference type="eggNOG" id="ENOG502S7MM">
    <property type="taxonomic scope" value="Eukaryota"/>
</dbReference>
<dbReference type="GeneTree" id="ENSGT00940000155233"/>
<dbReference type="HOGENOM" id="CLU_143902_1_0_1"/>
<dbReference type="InParanoid" id="P30348"/>
<dbReference type="OMA" id="HCKDVEV"/>
<dbReference type="OrthoDB" id="8872899at2759"/>
<dbReference type="PhylomeDB" id="P30348"/>
<dbReference type="TreeFam" id="TF333433"/>
<dbReference type="Reactome" id="R-RNO-380108">
    <property type="pathway name" value="Chemokine receptors bind chemokines"/>
</dbReference>
<dbReference type="Reactome" id="R-RNO-418594">
    <property type="pathway name" value="G alpha (i) signalling events"/>
</dbReference>
<dbReference type="PRO" id="PR:P30348"/>
<dbReference type="Proteomes" id="UP000002494">
    <property type="component" value="Chromosome 14"/>
</dbReference>
<dbReference type="Bgee" id="ENSRNOG00000002792">
    <property type="expression patterns" value="Expressed in stomach and 5 other cell types or tissues"/>
</dbReference>
<dbReference type="GO" id="GO:0005615">
    <property type="term" value="C:extracellular space"/>
    <property type="evidence" value="ECO:0000314"/>
    <property type="project" value="RGD"/>
</dbReference>
<dbReference type="GO" id="GO:0008009">
    <property type="term" value="F:chemokine activity"/>
    <property type="evidence" value="ECO:0000314"/>
    <property type="project" value="RGD"/>
</dbReference>
<dbReference type="GO" id="GO:0071347">
    <property type="term" value="P:cellular response to interleukin-1"/>
    <property type="evidence" value="ECO:0000270"/>
    <property type="project" value="RGD"/>
</dbReference>
<dbReference type="GO" id="GO:0071222">
    <property type="term" value="P:cellular response to lipopolysaccharide"/>
    <property type="evidence" value="ECO:0000270"/>
    <property type="project" value="RGD"/>
</dbReference>
<dbReference type="GO" id="GO:0006955">
    <property type="term" value="P:immune response"/>
    <property type="evidence" value="ECO:0007669"/>
    <property type="project" value="InterPro"/>
</dbReference>
<dbReference type="GO" id="GO:0006954">
    <property type="term" value="P:inflammatory response"/>
    <property type="evidence" value="ECO:0007669"/>
    <property type="project" value="UniProtKB-KW"/>
</dbReference>
<dbReference type="GO" id="GO:0030595">
    <property type="term" value="P:leukocyte chemotaxis"/>
    <property type="evidence" value="ECO:0000315"/>
    <property type="project" value="RGD"/>
</dbReference>
<dbReference type="GO" id="GO:0030593">
    <property type="term" value="P:neutrophil chemotaxis"/>
    <property type="evidence" value="ECO:0000315"/>
    <property type="project" value="RGD"/>
</dbReference>
<dbReference type="GO" id="GO:0007204">
    <property type="term" value="P:positive regulation of cytosolic calcium ion concentration"/>
    <property type="evidence" value="ECO:0000314"/>
    <property type="project" value="RGD"/>
</dbReference>
<dbReference type="GO" id="GO:0001975">
    <property type="term" value="P:response to amphetamine"/>
    <property type="evidence" value="ECO:0000270"/>
    <property type="project" value="RGD"/>
</dbReference>
<dbReference type="GO" id="GO:0032355">
    <property type="term" value="P:response to estradiol"/>
    <property type="evidence" value="ECO:0000270"/>
    <property type="project" value="RGD"/>
</dbReference>
<dbReference type="GO" id="GO:0010332">
    <property type="term" value="P:response to gamma radiation"/>
    <property type="evidence" value="ECO:0000270"/>
    <property type="project" value="RGD"/>
</dbReference>
<dbReference type="GO" id="GO:0051384">
    <property type="term" value="P:response to glucocorticoid"/>
    <property type="evidence" value="ECO:0000270"/>
    <property type="project" value="RGD"/>
</dbReference>
<dbReference type="GO" id="GO:0002237">
    <property type="term" value="P:response to molecule of bacterial origin"/>
    <property type="evidence" value="ECO:0000266"/>
    <property type="project" value="RGD"/>
</dbReference>
<dbReference type="CDD" id="cd00273">
    <property type="entry name" value="Chemokine_CXC"/>
    <property type="match status" value="1"/>
</dbReference>
<dbReference type="FunFam" id="2.40.50.40:FF:000004">
    <property type="entry name" value="C-X-C motif chemokine"/>
    <property type="match status" value="1"/>
</dbReference>
<dbReference type="Gene3D" id="2.40.50.40">
    <property type="match status" value="1"/>
</dbReference>
<dbReference type="InterPro" id="IPR039809">
    <property type="entry name" value="Chemokine_b/g/d"/>
</dbReference>
<dbReference type="InterPro" id="IPR001089">
    <property type="entry name" value="Chemokine_CXC"/>
</dbReference>
<dbReference type="InterPro" id="IPR018048">
    <property type="entry name" value="Chemokine_CXC_CS"/>
</dbReference>
<dbReference type="InterPro" id="IPR001811">
    <property type="entry name" value="Chemokine_IL8-like_dom"/>
</dbReference>
<dbReference type="InterPro" id="IPR033899">
    <property type="entry name" value="CXC_Chemokine_domain"/>
</dbReference>
<dbReference type="InterPro" id="IPR036048">
    <property type="entry name" value="Interleukin_8-like_sf"/>
</dbReference>
<dbReference type="PANTHER" id="PTHR12015:SF194">
    <property type="entry name" value="C-X-C MOTIF CHEMOKINE 2"/>
    <property type="match status" value="1"/>
</dbReference>
<dbReference type="PANTHER" id="PTHR12015">
    <property type="entry name" value="SMALL INDUCIBLE CYTOKINE A"/>
    <property type="match status" value="1"/>
</dbReference>
<dbReference type="Pfam" id="PF00048">
    <property type="entry name" value="IL8"/>
    <property type="match status" value="1"/>
</dbReference>
<dbReference type="PRINTS" id="PR00436">
    <property type="entry name" value="INTERLEUKIN8"/>
</dbReference>
<dbReference type="PRINTS" id="PR00437">
    <property type="entry name" value="SMALLCYTKCXC"/>
</dbReference>
<dbReference type="SMART" id="SM00199">
    <property type="entry name" value="SCY"/>
    <property type="match status" value="1"/>
</dbReference>
<dbReference type="SUPFAM" id="SSF54117">
    <property type="entry name" value="Interleukin 8-like chemokines"/>
    <property type="match status" value="1"/>
</dbReference>
<dbReference type="PROSITE" id="PS00471">
    <property type="entry name" value="SMALL_CYTOKINES_CXC"/>
    <property type="match status" value="1"/>
</dbReference>
<proteinExistence type="evidence at protein level"/>
<organism>
    <name type="scientific">Rattus norvegicus</name>
    <name type="common">Rat</name>
    <dbReference type="NCBI Taxonomy" id="10116"/>
    <lineage>
        <taxon>Eukaryota</taxon>
        <taxon>Metazoa</taxon>
        <taxon>Chordata</taxon>
        <taxon>Craniata</taxon>
        <taxon>Vertebrata</taxon>
        <taxon>Euteleostomi</taxon>
        <taxon>Mammalia</taxon>
        <taxon>Eutheria</taxon>
        <taxon>Euarchontoglires</taxon>
        <taxon>Glires</taxon>
        <taxon>Rodentia</taxon>
        <taxon>Myomorpha</taxon>
        <taxon>Muroidea</taxon>
        <taxon>Muridae</taxon>
        <taxon>Murinae</taxon>
        <taxon>Rattus</taxon>
    </lineage>
</organism>
<accession>P30348</accession>
<accession>Q5WA60</accession>
<name>CXCL2_RAT</name>
<keyword id="KW-0145">Chemotaxis</keyword>
<keyword id="KW-0202">Cytokine</keyword>
<keyword id="KW-0903">Direct protein sequencing</keyword>
<keyword id="KW-1015">Disulfide bond</keyword>
<keyword id="KW-0395">Inflammatory response</keyword>
<keyword id="KW-1185">Reference proteome</keyword>
<keyword id="KW-0964">Secreted</keyword>
<keyword id="KW-0732">Signal</keyword>
<comment type="function">
    <text>Chemotactic for human polymorphonuclear leukocytes but does not induce chemokinesis or an oxidative burst. Contributes to neutrophil activation during inflammation.</text>
</comment>
<comment type="subunit">
    <text>Homotetramer.</text>
</comment>
<comment type="subcellular location">
    <subcellularLocation>
        <location>Secreted</location>
    </subcellularLocation>
</comment>
<comment type="tissue specificity">
    <text>At least expressed in the lung and trachea.</text>
</comment>
<comment type="induction">
    <text>By lipopolysaccharide (LPS) and inflammation; in lung.</text>
</comment>
<comment type="similarity">
    <text evidence="5">Belongs to the intercrine alpha (chemokine CxC) family.</text>
</comment>
<reference key="1">
    <citation type="journal article" date="1995" name="J. Leukoc. Biol.">
        <title>Cloning, expression, and functional characterization of rat MIP-2: a neutrophil chemoattractant and epithelial cell mitogen.</title>
        <authorList>
            <person name="Driscoll K.E."/>
            <person name="Hassenbein D.G."/>
            <person name="Howard B.W."/>
            <person name="Isfort R.J."/>
            <person name="Cody D."/>
            <person name="Tindal M.H."/>
            <person name="Suchanek M."/>
            <person name="Carter J.M."/>
        </authorList>
    </citation>
    <scope>NUCLEOTIDE SEQUENCE [MRNA]</scope>
    <source>
        <strain>Fischer 344</strain>
        <tissue>Lung</tissue>
    </source>
</reference>
<reference key="2">
    <citation type="journal article" date="1995" name="J. Clin. Invest.">
        <title>Modulation of neutrophil influx in glomerulonephritis in the rat with anti-macrophage inflammatory protein-2 (MIP-2) antibody.</title>
        <authorList>
            <person name="Feng L."/>
            <person name="Xia Y."/>
            <person name="Yoshimura T."/>
            <person name="Wilson C.B."/>
        </authorList>
    </citation>
    <scope>NUCLEOTIDE SEQUENCE [MRNA]</scope>
    <source>
        <strain>Fischer</strain>
    </source>
</reference>
<reference key="3">
    <citation type="submission" date="1996-03" db="EMBL/GenBank/DDBJ databases">
        <title>Molecular cloning and mRNA expression of rat macrophage inflammatory protein-2.</title>
        <authorList>
            <person name="Farone A."/>
            <person name="Farone M."/>
            <person name="Shi M.M."/>
            <person name="Kobzik L."/>
            <person name="Paulauskis J.D."/>
        </authorList>
    </citation>
    <scope>NUCLEOTIDE SEQUENCE [MRNA]</scope>
    <source>
        <strain>CD Charles River</strain>
        <tissue>Lung</tissue>
    </source>
</reference>
<reference key="4">
    <citation type="journal article" date="2003" name="J. Cell. Biochem.">
        <title>Analysis of the mechanism regulating the stability of rat macrophage inflammatory protein-2 mRNA in RBL-2H3 cells.</title>
        <authorList>
            <person name="Numahata K."/>
            <person name="Komagata T."/>
            <person name="Hirasawa N."/>
            <person name="Someya K."/>
            <person name="Xiao Y.Q."/>
            <person name="Ohuchi K."/>
        </authorList>
    </citation>
    <scope>NUCLEOTIDE SEQUENCE [MRNA]</scope>
    <source>
        <strain>Sprague-Dawley</strain>
    </source>
</reference>
<reference key="5">
    <citation type="journal article" date="1992" name="Am. J. Pathol.">
        <title>Expression of macrophage inflammatory protein-2 and KC mRNA in pulmonary inflammation.</title>
        <authorList>
            <person name="Huang S."/>
            <person name="Paulauskis J.D."/>
            <person name="Godleski J.J."/>
            <person name="Kobzik L."/>
        </authorList>
    </citation>
    <scope>NUCLEOTIDE SEQUENCE [MRNA] OF 39-91</scope>
    <source>
        <tissue>Lung</tissue>
    </source>
</reference>
<reference key="6">
    <citation type="journal article" date="1994" name="Biochem. J.">
        <title>Identification of cytokine-induced neutrophil chemoattractants (CINC), rat GRO/CINC-2 alpha and CINC-2 beta, produced by granulation tissue in culture: purification, complete amino acid sequences and characterization.</title>
        <authorList>
            <person name="Nakagawa H."/>
            <person name="Komorita N."/>
            <person name="Shibata F."/>
            <person name="Ikesue A."/>
            <person name="Konishi K."/>
            <person name="Fujioka M."/>
            <person name="Kato H."/>
        </authorList>
    </citation>
    <scope>PROTEIN SEQUENCE OF 32-100</scope>
    <source>
        <strain>Wistar</strain>
    </source>
</reference>
<reference key="7">
    <citation type="journal article" date="1996" name="Biochem. Biophys. Res. Commun.">
        <title>Cytokine-induced neutrophil chemoattractant (CINC)-2 alpha, a novel member of rat GRO/CINCs, is a predominant chemokine produced by lipopolysaccharide-stimulated rat macrophages in culture.</title>
        <authorList>
            <person name="Nakagawa H."/>
            <person name="Shiota S."/>
            <person name="Takano K."/>
            <person name="Shibata F."/>
            <person name="Kato H."/>
        </authorList>
    </citation>
    <scope>PROTEIN SEQUENCE OF 32-59</scope>
    <source>
        <strain>Wistar</strain>
    </source>
</reference>
<reference key="8">
    <citation type="journal article" date="1993" name="Biochem. Pharmacol.">
        <title>Production of an interleukin-8-like chemokine by cytokine-stimulated rat NRK-49F fibroblasts and its suppression by anti-inflammatory steroids.</title>
        <authorList>
            <person name="Nakagawa H."/>
            <person name="Ikesue A."/>
            <person name="Hatakeyama S."/>
            <person name="Kato H."/>
            <person name="Gotoda T."/>
            <person name="Komorita N."/>
            <person name="Watanabe K."/>
            <person name="Miyai H."/>
        </authorList>
    </citation>
    <scope>PROTEIN SEQUENCE OF 32-45</scope>
</reference>
<evidence type="ECO:0000250" key="1"/>
<evidence type="ECO:0000269" key="2">
    <source>
    </source>
</evidence>
<evidence type="ECO:0000269" key="3">
    <source>
    </source>
</evidence>
<evidence type="ECO:0000269" key="4">
    <source>
    </source>
</evidence>
<evidence type="ECO:0000305" key="5"/>
<gene>
    <name type="primary">Cxcl2</name>
    <name type="synonym">Cinc3</name>
    <name type="synonym">Mip-2</name>
    <name type="synonym">Mip2</name>
    <name type="synonym">Scyb2</name>
</gene>